<protein>
    <recommendedName>
        <fullName evidence="13">Spastin homolog</fullName>
        <ecNumber evidence="7 8">5.6.1.1</ecNumber>
    </recommendedName>
</protein>
<accession>Q8MNV0</accession>
<accession>G5EEF8</accession>
<accession>Q7M3K5</accession>
<accession>Q8MNU9</accession>
<reference evidence="14" key="1">
    <citation type="submission" date="2006-12" db="EMBL/GenBank/DDBJ databases">
        <title>Spastin deficiency in C.elegans results in premature termination of motor axons.</title>
        <authorList>
            <person name="Han C."/>
            <person name="Hobert O."/>
            <person name="Lauring B."/>
        </authorList>
    </citation>
    <scope>NUCLEOTIDE SEQUENCE [MRNA]</scope>
</reference>
<reference key="2">
    <citation type="journal article" date="1998" name="Science">
        <title>Genome sequence of the nematode C. elegans: a platform for investigating biology.</title>
        <authorList>
            <consortium name="The C. elegans sequencing consortium"/>
        </authorList>
    </citation>
    <scope>NUCLEOTIDE SEQUENCE [LARGE SCALE GENOMIC DNA]</scope>
    <source>
        <strain>Bristol N2</strain>
    </source>
</reference>
<reference key="3">
    <citation type="journal article" date="2007" name="Biochem. Biophys. Res. Commun.">
        <title>The C. elegans homologue of the spastic paraplegia protein, spastin, disassembles microtubules.</title>
        <authorList>
            <person name="Matsushita-Ishiodori Y."/>
            <person name="Yamanaka K."/>
            <person name="Ogura T."/>
        </authorList>
    </citation>
    <scope>FUNCTION</scope>
    <scope>SUBCELLULAR LOCATION</scope>
    <scope>ALTERNATIVE SPLICING</scope>
    <scope>DEVELOPMENTAL STAGE</scope>
    <scope>DISRUPTION PHENOTYPE</scope>
    <scope>MUTAGENESIS OF LYS-285; TRP-312 AND GLU-339</scope>
</reference>
<reference key="4">
    <citation type="journal article" date="2009" name="Genes Cells">
        <title>Conserved aromatic and basic amino acid residues in the pore region of Caenorhabditis elegans spastin play critical roles in microtubule severing.</title>
        <authorList>
            <person name="Matsushita-Ishiodori Y."/>
            <person name="Yamanaka K."/>
            <person name="Hashimoto H."/>
            <person name="Esaki M."/>
            <person name="Ogura T."/>
        </authorList>
    </citation>
    <scope>FUNCTION</scope>
    <scope>CATALYTIC ACTIVITY</scope>
    <scope>BIOPHYSICOCHEMICAL PROPERTIES</scope>
    <scope>SUBUNIT</scope>
    <scope>INTERACTION WITH TUBULIN</scope>
    <scope>DOMAIN</scope>
    <scope>MUTAGENESIS OF 1-MET--ASN-103; ARG-237; LYS-266; LYS-285; LYS-297; TRP-312; LYS-318; ARG-321; ARG-328; GLU-339; ARG-347; ARG-356 AND ARG-357</scope>
</reference>
<reference key="5">
    <citation type="journal article" date="2012" name="J. Struct. Biol.">
        <title>The C-terminal alpha-helix of SPAS-1, a Caenorhabditis elegans spastin homologue, is crucial for microtubule severing.</title>
        <authorList>
            <person name="Onitake A."/>
            <person name="Matsushita-Ishiodori Y."/>
            <person name="Johjima A."/>
            <person name="Esaki M."/>
            <person name="Ogura T."/>
            <person name="Yamanaka K."/>
        </authorList>
    </citation>
    <scope>FUNCTION</scope>
    <scope>CATALYTIC ACTIVITY</scope>
    <scope>SUBUNIT</scope>
    <scope>MUTAGENESIS OF ARG-285; LYS-498; LYS-502; 498-SER--CYS-512; 497-GLN--CYS-512 AND 509-SER--CYS-512</scope>
</reference>
<reference key="6">
    <citation type="journal article" date="2015" name="Curr. Biol.">
        <title>Dynamic microtubules drive circuit rewiring in the absence of neurite remodeling.</title>
        <authorList>
            <person name="Kurup N."/>
            <person name="Yan D."/>
            <person name="Goncharov A."/>
            <person name="Jin Y."/>
        </authorList>
    </citation>
    <scope>FUNCTION</scope>
</reference>
<reference key="7">
    <citation type="journal article" date="2015" name="PLoS Genet.">
        <title>Spastin binds to lipid droplets and affects lipid metabolism.</title>
        <authorList>
            <person name="Papadopoulos C."/>
            <person name="Orso G."/>
            <person name="Mancuso G."/>
            <person name="Herholz M."/>
            <person name="Gumeni S."/>
            <person name="Tadepalle N."/>
            <person name="Juengst C."/>
            <person name="Tzschichholz A."/>
            <person name="Schauss A."/>
            <person name="Hoening S."/>
            <person name="Trifunovic A."/>
            <person name="Daga A."/>
            <person name="Rugarli E.I."/>
        </authorList>
    </citation>
    <scope>DISRUPTION PHENOTYPE</scope>
</reference>
<reference key="8">
    <citation type="journal article" date="2016" name="Hum. Mol. Genet.">
        <title>Conserved pharmacological rescue of hereditary spastic paraplegia-related phenotypes across model organisms.</title>
        <authorList>
            <person name="Julien C."/>
            <person name="Lissouba A."/>
            <person name="Madabattula S."/>
            <person name="Fardghassemi Y."/>
            <person name="Rosenfelt C."/>
            <person name="Androschuk A."/>
            <person name="Strautman J."/>
            <person name="Wong C."/>
            <person name="Bysice A."/>
            <person name="O'sullivan J."/>
            <person name="Rouleau G.A."/>
            <person name="Drapeau P."/>
            <person name="Parker J.A."/>
            <person name="Bolduc F.V."/>
        </authorList>
    </citation>
    <scope>DISRUPTION PHENOTYPE</scope>
</reference>
<reference key="9">
    <citation type="journal article" date="2008" name="Nature">
        <title>Structural basis of microtubule severing by the hereditary spastic paraplegia protein spastin.</title>
        <authorList>
            <person name="Roll-Mecak A."/>
            <person name="Vale R.D."/>
        </authorList>
    </citation>
    <scope>3D-STRUCTURE MODELING</scope>
    <scope>FUNCTION</scope>
    <scope>SUBUNIT</scope>
    <scope>MUTAGENESIS OF GLU-339</scope>
</reference>
<sequence length="512" mass="56901">MFAFSKGPAGSSTYDRVAQKFQDGYEKMRAAIEMDELTKHAGSIQEKLRTAELYKEARSLLKEANEFNIMDIPETRRSEIRDKRQNMMKLEKSAQDRLIAICNEVDPNVKQSRSATVGPSRPASAARVTPRPTRATAPEKKNAAKAKENDENRHVCSRGDRCGAHHQPVTKKSDTVHPEPPVQASNRKMETVKRVKVDKASLPMHQNPVNRAALLNGVDKVIGERLLDEVLDNTGVRMDDVAGCHSAKAALEEAVILPALNPNLFKGLRQPVKGILLFGPPGNGKTLLAKAVAGESKQMFFNISASSLTSKWVGDSEKTIRGLFQIARNAQPSIIFIDEIDSILCERSEKDAEVSRRMKTEFLVQFDGATSSADDRILVIGATNRPHELDDAVLRRFPKRIMLNLPDEEARKELITKTLKKHNMMDGLISSDIRYIASNTSGFSNSDLVALCKEAAMVPIREIDRSKLSMTDGEKIRKIRASDFDTALRTIRPSTSQKIMSKLSDFSRSFGC</sequence>
<gene>
    <name evidence="12 16" type="primary">spas-1</name>
    <name evidence="16" type="ORF">C24B5.2</name>
</gene>
<name>SPAST_CAEEL</name>
<evidence type="ECO:0000250" key="1">
    <source>
        <dbReference type="UniProtKB" id="Q9UBP0"/>
    </source>
</evidence>
<evidence type="ECO:0000255" key="2"/>
<evidence type="ECO:0000255" key="3">
    <source>
        <dbReference type="PROSITE-ProRule" id="PRU00499"/>
    </source>
</evidence>
<evidence type="ECO:0000256" key="4">
    <source>
        <dbReference type="SAM" id="MobiDB-lite"/>
    </source>
</evidence>
<evidence type="ECO:0000269" key="5">
    <source>
    </source>
</evidence>
<evidence type="ECO:0000269" key="6">
    <source>
    </source>
</evidence>
<evidence type="ECO:0000269" key="7">
    <source>
    </source>
</evidence>
<evidence type="ECO:0000269" key="8">
    <source>
    </source>
</evidence>
<evidence type="ECO:0000269" key="9">
    <source>
    </source>
</evidence>
<evidence type="ECO:0000269" key="10">
    <source>
    </source>
</evidence>
<evidence type="ECO:0000269" key="11">
    <source>
    </source>
</evidence>
<evidence type="ECO:0000303" key="12">
    <source>
    </source>
</evidence>
<evidence type="ECO:0000305" key="13"/>
<evidence type="ECO:0000312" key="14">
    <source>
        <dbReference type="EMBL" id="BAH80101.1"/>
    </source>
</evidence>
<evidence type="ECO:0000312" key="15">
    <source>
        <dbReference type="WormBase" id="C24B5.2a"/>
    </source>
</evidence>
<evidence type="ECO:0000312" key="16">
    <source>
        <dbReference type="WormBase" id="C24B5.2c"/>
    </source>
</evidence>
<proteinExistence type="evidence at protein level"/>
<dbReference type="EC" id="5.6.1.1" evidence="7 8"/>
<dbReference type="EMBL" id="AB287436">
    <property type="protein sequence ID" value="BAH80101.1"/>
    <property type="molecule type" value="mRNA"/>
</dbReference>
<dbReference type="EMBL" id="BX284605">
    <property type="protein sequence ID" value="CCD61426.1"/>
    <property type="molecule type" value="Genomic_DNA"/>
</dbReference>
<dbReference type="EMBL" id="BX284605">
    <property type="protein sequence ID" value="CCD61430.1"/>
    <property type="molecule type" value="Genomic_DNA"/>
</dbReference>
<dbReference type="RefSeq" id="NP_001256115.1">
    <molecule id="Q8MNV0-1"/>
    <property type="nucleotide sequence ID" value="NM_001269186.3"/>
</dbReference>
<dbReference type="RefSeq" id="NP_741586.1">
    <molecule id="Q8MNV0-2"/>
    <property type="nucleotide sequence ID" value="NM_171501.7"/>
</dbReference>
<dbReference type="SMR" id="Q8MNV0"/>
<dbReference type="BioGRID" id="44338">
    <property type="interactions" value="2"/>
</dbReference>
<dbReference type="DIP" id="DIP-59833N"/>
<dbReference type="FunCoup" id="Q8MNV0">
    <property type="interactions" value="1623"/>
</dbReference>
<dbReference type="STRING" id="6239.C24B5.2c.1"/>
<dbReference type="PaxDb" id="6239-C24B5.2c"/>
<dbReference type="PeptideAtlas" id="Q8MNV0"/>
<dbReference type="EnsemblMetazoa" id="C24B5.2a.1">
    <molecule id="Q8MNV0-2"/>
    <property type="protein sequence ID" value="C24B5.2a.1"/>
    <property type="gene ID" value="WBGene00016045"/>
</dbReference>
<dbReference type="EnsemblMetazoa" id="C24B5.2c.1">
    <molecule id="Q8MNV0-1"/>
    <property type="protein sequence ID" value="C24B5.2c.1"/>
    <property type="gene ID" value="WBGene00016045"/>
</dbReference>
<dbReference type="GeneID" id="179300"/>
<dbReference type="KEGG" id="cel:CELE_C24B5.2"/>
<dbReference type="UCSC" id="C24B5.2a">
    <property type="organism name" value="c. elegans"/>
</dbReference>
<dbReference type="AGR" id="WB:WBGene00016045"/>
<dbReference type="CTD" id="179300"/>
<dbReference type="WormBase" id="C24B5.2a">
    <molecule id="Q8MNV0-2"/>
    <property type="protein sequence ID" value="CE30731"/>
    <property type="gene ID" value="WBGene00016045"/>
    <property type="gene designation" value="spas-1"/>
</dbReference>
<dbReference type="WormBase" id="C24B5.2c">
    <molecule id="Q8MNV0-1"/>
    <property type="protein sequence ID" value="CE20522"/>
    <property type="gene ID" value="WBGene00016045"/>
    <property type="gene designation" value="spas-1"/>
</dbReference>
<dbReference type="eggNOG" id="KOG0740">
    <property type="taxonomic scope" value="Eukaryota"/>
</dbReference>
<dbReference type="GeneTree" id="ENSGT00940000156258"/>
<dbReference type="InParanoid" id="Q8MNV0"/>
<dbReference type="OMA" id="CSTYERV"/>
<dbReference type="OrthoDB" id="10251136at2759"/>
<dbReference type="PhylomeDB" id="Q8MNV0"/>
<dbReference type="BRENDA" id="5.6.1.1">
    <property type="organism ID" value="1045"/>
</dbReference>
<dbReference type="Reactome" id="R-CEL-9668328">
    <property type="pathway name" value="Sealing of the nuclear envelope (NE) by ESCRT-III"/>
</dbReference>
<dbReference type="PRO" id="PR:Q8MNV0"/>
<dbReference type="Proteomes" id="UP000001940">
    <property type="component" value="Chromosome V"/>
</dbReference>
<dbReference type="Bgee" id="WBGene00016045">
    <property type="expression patterns" value="Expressed in germ line (C elegans) and 7 other cell types or tissues"/>
</dbReference>
<dbReference type="ExpressionAtlas" id="Q8MNV0">
    <property type="expression patterns" value="baseline and differential"/>
</dbReference>
<dbReference type="GO" id="GO:0005737">
    <property type="term" value="C:cytoplasm"/>
    <property type="evidence" value="ECO:0000314"/>
    <property type="project" value="UniProtKB"/>
</dbReference>
<dbReference type="GO" id="GO:0005856">
    <property type="term" value="C:cytoskeleton"/>
    <property type="evidence" value="ECO:0000314"/>
    <property type="project" value="WormBase"/>
</dbReference>
<dbReference type="GO" id="GO:0016020">
    <property type="term" value="C:membrane"/>
    <property type="evidence" value="ECO:0007669"/>
    <property type="project" value="UniProtKB-SubCell"/>
</dbReference>
<dbReference type="GO" id="GO:0005874">
    <property type="term" value="C:microtubule"/>
    <property type="evidence" value="ECO:0007669"/>
    <property type="project" value="UniProtKB-KW"/>
</dbReference>
<dbReference type="GO" id="GO:0015630">
    <property type="term" value="C:microtubule cytoskeleton"/>
    <property type="evidence" value="ECO:0000318"/>
    <property type="project" value="GO_Central"/>
</dbReference>
<dbReference type="GO" id="GO:0048471">
    <property type="term" value="C:perinuclear region of cytoplasm"/>
    <property type="evidence" value="ECO:0000314"/>
    <property type="project" value="UniProtKB"/>
</dbReference>
<dbReference type="GO" id="GO:0032991">
    <property type="term" value="C:protein-containing complex"/>
    <property type="evidence" value="ECO:0000353"/>
    <property type="project" value="WormBase"/>
</dbReference>
<dbReference type="GO" id="GO:0005524">
    <property type="term" value="F:ATP binding"/>
    <property type="evidence" value="ECO:0000315"/>
    <property type="project" value="UniProtKB"/>
</dbReference>
<dbReference type="GO" id="GO:0016887">
    <property type="term" value="F:ATP hydrolysis activity"/>
    <property type="evidence" value="ECO:0000314"/>
    <property type="project" value="WormBase"/>
</dbReference>
<dbReference type="GO" id="GO:0042802">
    <property type="term" value="F:identical protein binding"/>
    <property type="evidence" value="ECO:0000353"/>
    <property type="project" value="IntAct"/>
</dbReference>
<dbReference type="GO" id="GO:0008017">
    <property type="term" value="F:microtubule binding"/>
    <property type="evidence" value="ECO:0000314"/>
    <property type="project" value="WormBase"/>
</dbReference>
<dbReference type="GO" id="GO:0008568">
    <property type="term" value="F:microtubule severing ATPase activity"/>
    <property type="evidence" value="ECO:0000314"/>
    <property type="project" value="WormBase"/>
</dbReference>
<dbReference type="GO" id="GO:0001578">
    <property type="term" value="P:microtubule bundle formation"/>
    <property type="evidence" value="ECO:0000303"/>
    <property type="project" value="UniProtKB"/>
</dbReference>
<dbReference type="GO" id="GO:0007019">
    <property type="term" value="P:microtubule depolymerization"/>
    <property type="evidence" value="ECO:0000314"/>
    <property type="project" value="WormBase"/>
</dbReference>
<dbReference type="GO" id="GO:0051013">
    <property type="term" value="P:microtubule severing"/>
    <property type="evidence" value="ECO:0000314"/>
    <property type="project" value="UniProtKB"/>
</dbReference>
<dbReference type="GO" id="GO:0007399">
    <property type="term" value="P:nervous system development"/>
    <property type="evidence" value="ECO:0007669"/>
    <property type="project" value="UniProtKB-KW"/>
</dbReference>
<dbReference type="GO" id="GO:0051647">
    <property type="term" value="P:nucleus localization"/>
    <property type="evidence" value="ECO:0000315"/>
    <property type="project" value="WormBase"/>
</dbReference>
<dbReference type="GO" id="GO:0048477">
    <property type="term" value="P:oogenesis"/>
    <property type="evidence" value="ECO:0000315"/>
    <property type="project" value="WormBase"/>
</dbReference>
<dbReference type="GO" id="GO:0031117">
    <property type="term" value="P:positive regulation of microtubule depolymerization"/>
    <property type="evidence" value="ECO:0000314"/>
    <property type="project" value="UniProtKB"/>
</dbReference>
<dbReference type="GO" id="GO:0040025">
    <property type="term" value="P:vulval development"/>
    <property type="evidence" value="ECO:0000315"/>
    <property type="project" value="WormBase"/>
</dbReference>
<dbReference type="FunFam" id="1.10.8.60:FF:000022">
    <property type="entry name" value="Fidgetin like 1"/>
    <property type="match status" value="1"/>
</dbReference>
<dbReference type="FunFam" id="3.40.50.300:FF:000093">
    <property type="entry name" value="Fidgetin-like 1"/>
    <property type="match status" value="1"/>
</dbReference>
<dbReference type="Gene3D" id="1.10.8.60">
    <property type="match status" value="1"/>
</dbReference>
<dbReference type="Gene3D" id="3.40.50.300">
    <property type="entry name" value="P-loop containing nucleotide triphosphate hydrolases"/>
    <property type="match status" value="1"/>
</dbReference>
<dbReference type="InterPro" id="IPR003593">
    <property type="entry name" value="AAA+_ATPase"/>
</dbReference>
<dbReference type="InterPro" id="IPR041569">
    <property type="entry name" value="AAA_lid_3"/>
</dbReference>
<dbReference type="InterPro" id="IPR003959">
    <property type="entry name" value="ATPase_AAA_core"/>
</dbReference>
<dbReference type="InterPro" id="IPR003960">
    <property type="entry name" value="ATPase_AAA_CS"/>
</dbReference>
<dbReference type="InterPro" id="IPR050304">
    <property type="entry name" value="MT-severing_AAA_ATPase"/>
</dbReference>
<dbReference type="InterPro" id="IPR027417">
    <property type="entry name" value="P-loop_NTPase"/>
</dbReference>
<dbReference type="PANTHER" id="PTHR23074">
    <property type="entry name" value="AAA DOMAIN-CONTAINING"/>
    <property type="match status" value="1"/>
</dbReference>
<dbReference type="PANTHER" id="PTHR23074:SF86">
    <property type="entry name" value="SPASTIN"/>
    <property type="match status" value="1"/>
</dbReference>
<dbReference type="Pfam" id="PF00004">
    <property type="entry name" value="AAA"/>
    <property type="match status" value="1"/>
</dbReference>
<dbReference type="Pfam" id="PF17862">
    <property type="entry name" value="AAA_lid_3"/>
    <property type="match status" value="1"/>
</dbReference>
<dbReference type="SMART" id="SM00382">
    <property type="entry name" value="AAA"/>
    <property type="match status" value="1"/>
</dbReference>
<dbReference type="SUPFAM" id="SSF52540">
    <property type="entry name" value="P-loop containing nucleoside triphosphate hydrolases"/>
    <property type="match status" value="1"/>
</dbReference>
<dbReference type="PROSITE" id="PS00674">
    <property type="entry name" value="AAA"/>
    <property type="match status" value="1"/>
</dbReference>
<comment type="function">
    <text evidence="5 6 7 8 10">ATP-dependent microtubule severing protein that specifically recognizes and cuts microtubules (PubMed:17531954, PubMed:18202664, PubMed:19619244, PubMed:22561316). Probably by regulating microtubule remodeling, plays a role in new synapse formation in GABAergic DD (Dorsal D type) neurons (PubMed:26051896).</text>
</comment>
<comment type="catalytic activity">
    <reaction evidence="7 8">
        <text>n ATP + n H2O + a microtubule = n ADP + n phosphate + (n+1) alpha/beta tubulin heterodimers.</text>
        <dbReference type="EC" id="5.6.1.1"/>
    </reaction>
</comment>
<comment type="biophysicochemical properties">
    <kinetics>
        <KM evidence="7">1.53 mM for ATP (at 37 degrees Celsius and pH 8.8)</KM>
        <Vmax evidence="7">115.0 nmol/min/mg enzyme (at 37 degrees Celsius and pH 8.8)</Vmax>
    </kinetics>
</comment>
<comment type="subunit">
    <text evidence="1 7 8">Homohexamer (PubMed:19619244, PubMed:22561316). The homohexamer is stabilized by ATP-binding (By similarity). The homohexamer may adopt a ring conformation through which microtubules pass prior to being severed. Interacts with microtubules (By similarity). Interacts (via N-terminus) with tubulin; the interaction is direct (PubMed:19619244).</text>
</comment>
<comment type="interaction">
    <interactant intactId="EBI-15680248">
        <id>Q8MNV0</id>
    </interactant>
    <interactant intactId="EBI-15680248">
        <id>Q8MNV0</id>
        <label>spas-1</label>
    </interactant>
    <organismsDiffer>false</organismsDiffer>
    <experiments>3</experiments>
</comment>
<comment type="subcellular location">
    <subcellularLocation>
        <location evidence="2">Membrane</location>
        <topology evidence="1">Peripheral membrane protein</topology>
    </subcellularLocation>
    <subcellularLocation>
        <location evidence="5">Cytoplasm</location>
        <location evidence="5">Cytoskeleton</location>
    </subcellularLocation>
    <subcellularLocation>
        <location evidence="5">Cytoplasm</location>
        <location evidence="5">Perinuclear region</location>
    </subcellularLocation>
    <text evidence="1 5">Forms an intramembrane hairpin-like structure in the membrane (By similarity). Localizes to the cytoskeleton, perinuclear region and cytoplasm in early embryos (PubMed:17531954).</text>
</comment>
<comment type="alternative products">
    <event type="alternative splicing"/>
    <isoform>
        <id>Q8MNV0-1</id>
        <name evidence="16">c</name>
        <name evidence="12">spas-1L</name>
        <sequence type="displayed"/>
    </isoform>
    <isoform>
        <id>Q8MNV0-2</id>
        <name evidence="15">a</name>
        <name evidence="12">spas-1S</name>
        <sequence type="described" ref="VSP_036645"/>
    </isoform>
</comment>
<comment type="developmental stage">
    <molecule>Isoform a</molecule>
    <text evidence="5">Expressed at all developmental stages (PubMed:17531954). Highly expressed in the embryo and expressed at lower levels in L3-L4 larvae (PubMed:17531954).</text>
</comment>
<comment type="developmental stage">
    <molecule>Isoform c</molecule>
    <text evidence="5">Highly expressed in the embryo (PubMed:17531954). Not expressed in L3-L4 larvae (PubMed:17531954).</text>
</comment>
<comment type="domain">
    <text evidence="7">The MTBD (microtubule binding domain) region mediates binding to microtubules and tubulin.</text>
</comment>
<comment type="disruption phenotype">
    <text evidence="5 9 11">Slow growth, reduced brood size, abnormal oogenesis and multiple vulvae (PubMed:17531954). Progressive locomotor defects, which is rescued following exposure to the drugs guanabenz, salubrinal, phenazine, or methylene blue (PubMed:26744324). Lifespan is prolonged following exposure to the drugs guanabenz, salubrinal or methylene blue, but not phenazine (PubMed:26744324). Increases numbers of centrosomal microtubules in early embryos (PubMed:17531954). Reduced neutral lipid levels in intestinal cells (PubMed:25875445). RNAi-mediated knockdown results in paralysis due to an increase in the endoplasmic reticulum stress response, which is rescued following exposure to the drugs methylene blue, guanabenz, salubrinal, or phenazine (PubMed:26744324).</text>
</comment>
<comment type="miscellaneous">
    <molecule>Isoform a</molecule>
    <text evidence="5">Produced by alternative splicing and the skipping of exon 4.</text>
</comment>
<comment type="miscellaneous">
    <molecule>Isoform c</molecule>
    <text evidence="5">Produced by alternative splicing, which results in the retention of exon 4.</text>
</comment>
<comment type="similarity">
    <text evidence="13">Belongs to the AAA ATPase family. Spastin subfamily.</text>
</comment>
<comment type="caution">
    <text evidence="12">Lacks the conserved MIT domain, which is one of the features of the spastin family.</text>
</comment>
<keyword id="KW-0025">Alternative splicing</keyword>
<keyword id="KW-0067">ATP-binding</keyword>
<keyword id="KW-0175">Coiled coil</keyword>
<keyword id="KW-0963">Cytoplasm</keyword>
<keyword id="KW-0206">Cytoskeleton</keyword>
<keyword id="KW-0413">Isomerase</keyword>
<keyword id="KW-0472">Membrane</keyword>
<keyword id="KW-0493">Microtubule</keyword>
<keyword id="KW-0524">Neurogenesis</keyword>
<keyword id="KW-0547">Nucleotide-binding</keyword>
<keyword id="KW-1185">Reference proteome</keyword>
<feature type="chain" id="PRO_0000367132" description="Spastin homolog">
    <location>
        <begin position="1"/>
        <end position="512"/>
    </location>
</feature>
<feature type="topological domain" description="Cytoplasmic" evidence="13">
    <location>
        <begin position="1"/>
        <end position="274"/>
    </location>
</feature>
<feature type="intramembrane region" description="Helical" evidence="1">
    <location>
        <begin position="275"/>
        <end position="294"/>
    </location>
</feature>
<feature type="topological domain" description="Cytoplasmic" evidence="13">
    <location>
        <begin position="295"/>
        <end position="512"/>
    </location>
</feature>
<feature type="region of interest" description="Disordered" evidence="4">
    <location>
        <begin position="110"/>
        <end position="182"/>
    </location>
</feature>
<feature type="region of interest" description="MTBD" evidence="7">
    <location>
        <begin position="115"/>
        <end position="233"/>
    </location>
</feature>
<feature type="coiled-coil region" evidence="2">
    <location>
        <begin position="32"/>
        <end position="97"/>
    </location>
</feature>
<feature type="compositionally biased region" description="Basic and acidic residues" evidence="4">
    <location>
        <begin position="137"/>
        <end position="163"/>
    </location>
</feature>
<feature type="binding site" evidence="3">
    <location>
        <begin position="279"/>
        <end position="286"/>
    </location>
    <ligand>
        <name>ATP</name>
        <dbReference type="ChEBI" id="CHEBI:30616"/>
    </ligand>
</feature>
<feature type="splice variant" id="VSP_036645" description="In isoform a." evidence="13">
    <location>
        <begin position="139"/>
        <end position="199"/>
    </location>
</feature>
<feature type="mutagenesis site" description="Abolishes interaction with tubulin." evidence="7">
    <location>
        <begin position="1"/>
        <end position="103"/>
    </location>
</feature>
<feature type="mutagenesis site" description="Does not abolish microtubule severing. Disperse cytoplasmic localization." evidence="7">
    <original>R</original>
    <variation>A</variation>
    <location>
        <position position="237"/>
    </location>
</feature>
<feature type="mutagenesis site" description="Does not abolish microtubule severing. Disperse cytoplasmic localization." evidence="7">
    <original>K</original>
    <variation>A</variation>
    <location>
        <position position="266"/>
    </location>
</feature>
<feature type="mutagenesis site" description="Abolishes ATP-binding and enzymatic activity. Abolishes microtubule severing. Forms homohexamers." evidence="5 7 8">
    <original>K</original>
    <variation>R</variation>
    <location>
        <position position="285"/>
    </location>
</feature>
<feature type="mutagenesis site" description="Does not abolish microtubule severing. Disperse cytoplasmic localization." evidence="7">
    <original>K</original>
    <variation>A</variation>
    <location>
        <position position="297"/>
    </location>
</feature>
<feature type="mutagenesis site" description="Abolishes microtubule severing. Abolishes microtubule localization; in association with A-318." evidence="5 7">
    <original>W</original>
    <variation>A</variation>
    <variation>E</variation>
    <variation>K</variation>
    <location>
        <position position="312"/>
    </location>
</feature>
<feature type="mutagenesis site" description="Does not abolish microtubule severing." evidence="7">
    <original>W</original>
    <variation>F</variation>
    <location>
        <position position="312"/>
    </location>
</feature>
<feature type="mutagenesis site" description="Increases enzymatic activity. Forms homohexamers. Localizes to microtubules, but microtubule severing is abolished. Abolishes microtubule localization; in association with A-312, A-321 or A-357. Does not abolish microtubule localization; in association with A-347 or A-356." evidence="7">
    <original>K</original>
    <variation>A</variation>
    <location>
        <position position="318"/>
    </location>
</feature>
<feature type="mutagenesis site" description="Abolishes microtubule severing. Disperse cytoplasmic localization. Abolishes microtubule localization; in association with A-318." evidence="7">
    <original>R</original>
    <variation>A</variation>
    <location>
        <position position="321"/>
    </location>
</feature>
<feature type="mutagenesis site" description="Does not abolish microtubule severing. Disperse cytoplasmic localization." evidence="7">
    <original>R</original>
    <variation>A</variation>
    <location>
        <position position="328"/>
    </location>
</feature>
<feature type="mutagenesis site" description="Abolishes enzymatic activity. Abrogates microtubule severing, promotes homohexamerization and promotes association with microtubules." evidence="5 6 7">
    <original>E</original>
    <variation>Q</variation>
    <location>
        <position position="339"/>
    </location>
</feature>
<feature type="mutagenesis site" description="Abolishes microtubule severing. Disperse cytoplasmic localization. Does not abolish microtubule localization; in association with A-318." evidence="7">
    <original>R</original>
    <variation>A</variation>
    <location>
        <position position="347"/>
    </location>
</feature>
<feature type="mutagenesis site" description="Abolishes microtubule severing. Disperse cytoplasmic localization. Does not abolish microtubule localization; in association with A-318." evidence="7">
    <original>R</original>
    <variation>A</variation>
    <location>
        <position position="356"/>
    </location>
</feature>
<feature type="mutagenesis site" description="Abolishes microtubule severing. Disperse cytoplasmic localization. Abolishes microtubule localization; in association with A-318." evidence="7">
    <original>R</original>
    <variation>A</variation>
    <location>
        <position position="357"/>
    </location>
</feature>
<feature type="mutagenesis site" description="Abolishes ATP-binding and reduces enzymatic activity. Abolishes microtubule severing. Forms homohexamers." evidence="8">
    <location>
        <begin position="494"/>
        <end position="512"/>
    </location>
</feature>
<feature type="mutagenesis site" description="Abolishes microtubule severing." evidence="8">
    <location>
        <begin position="497"/>
        <end position="512"/>
    </location>
</feature>
<feature type="mutagenesis site" description="Abolishes microtubule severing; in association with P-502." evidence="8">
    <original>K</original>
    <variation>P</variation>
    <location>
        <position position="498"/>
    </location>
</feature>
<feature type="mutagenesis site" description="Abolishes microtubule severing; in association with P-498." evidence="8">
    <original>K</original>
    <variation>P</variation>
    <location>
        <position position="502"/>
    </location>
</feature>
<feature type="mutagenesis site" description="Does not abolish microtubule severing." evidence="8">
    <location>
        <begin position="509"/>
        <end position="512"/>
    </location>
</feature>
<organism>
    <name type="scientific">Caenorhabditis elegans</name>
    <dbReference type="NCBI Taxonomy" id="6239"/>
    <lineage>
        <taxon>Eukaryota</taxon>
        <taxon>Metazoa</taxon>
        <taxon>Ecdysozoa</taxon>
        <taxon>Nematoda</taxon>
        <taxon>Chromadorea</taxon>
        <taxon>Rhabditida</taxon>
        <taxon>Rhabditina</taxon>
        <taxon>Rhabditomorpha</taxon>
        <taxon>Rhabditoidea</taxon>
        <taxon>Rhabditidae</taxon>
        <taxon>Peloderinae</taxon>
        <taxon>Caenorhabditis</taxon>
    </lineage>
</organism>